<comment type="function">
    <text evidence="2">One of the primary rRNA binding proteins, it binds directly to 16S rRNA central domain where it helps coordinate assembly of the platform of the 30S subunit.</text>
</comment>
<comment type="subunit">
    <text evidence="2">Part of the 30S ribosomal subunit. Contacts proteins S5 and S12.</text>
</comment>
<comment type="similarity">
    <text evidence="2">Belongs to the universal ribosomal protein uS8 family.</text>
</comment>
<comment type="sequence caution" evidence="3">
    <conflict type="erroneous initiation">
        <sequence resource="EMBL-CDS" id="BAD74405"/>
    </conflict>
</comment>
<evidence type="ECO:0000250" key="1"/>
<evidence type="ECO:0000255" key="2">
    <source>
        <dbReference type="HAMAP-Rule" id="MF_01302"/>
    </source>
</evidence>
<evidence type="ECO:0000305" key="3"/>
<name>RS8_GEOKA</name>
<organism>
    <name type="scientific">Geobacillus kaustophilus (strain HTA426)</name>
    <dbReference type="NCBI Taxonomy" id="235909"/>
    <lineage>
        <taxon>Bacteria</taxon>
        <taxon>Bacillati</taxon>
        <taxon>Bacillota</taxon>
        <taxon>Bacilli</taxon>
        <taxon>Bacillales</taxon>
        <taxon>Anoxybacillaceae</taxon>
        <taxon>Geobacillus</taxon>
        <taxon>Geobacillus thermoleovorans group</taxon>
    </lineage>
</organism>
<dbReference type="EMBL" id="BA000043">
    <property type="protein sequence ID" value="BAD74405.1"/>
    <property type="status" value="ALT_INIT"/>
    <property type="molecule type" value="Genomic_DNA"/>
</dbReference>
<dbReference type="RefSeq" id="WP_012820490.1">
    <property type="nucleotide sequence ID" value="NC_006510.1"/>
</dbReference>
<dbReference type="SMR" id="Q5L409"/>
<dbReference type="STRING" id="235909.GK0120"/>
<dbReference type="GeneID" id="32062108"/>
<dbReference type="KEGG" id="gka:GK0120"/>
<dbReference type="eggNOG" id="COG0096">
    <property type="taxonomic scope" value="Bacteria"/>
</dbReference>
<dbReference type="HOGENOM" id="CLU_098428_0_2_9"/>
<dbReference type="Proteomes" id="UP000001172">
    <property type="component" value="Chromosome"/>
</dbReference>
<dbReference type="GO" id="GO:1990904">
    <property type="term" value="C:ribonucleoprotein complex"/>
    <property type="evidence" value="ECO:0007669"/>
    <property type="project" value="UniProtKB-KW"/>
</dbReference>
<dbReference type="GO" id="GO:0005840">
    <property type="term" value="C:ribosome"/>
    <property type="evidence" value="ECO:0007669"/>
    <property type="project" value="UniProtKB-KW"/>
</dbReference>
<dbReference type="GO" id="GO:0019843">
    <property type="term" value="F:rRNA binding"/>
    <property type="evidence" value="ECO:0007669"/>
    <property type="project" value="UniProtKB-UniRule"/>
</dbReference>
<dbReference type="GO" id="GO:0003735">
    <property type="term" value="F:structural constituent of ribosome"/>
    <property type="evidence" value="ECO:0007669"/>
    <property type="project" value="InterPro"/>
</dbReference>
<dbReference type="GO" id="GO:0006412">
    <property type="term" value="P:translation"/>
    <property type="evidence" value="ECO:0007669"/>
    <property type="project" value="UniProtKB-UniRule"/>
</dbReference>
<dbReference type="FunFam" id="3.30.1370.30:FF:000002">
    <property type="entry name" value="30S ribosomal protein S8"/>
    <property type="match status" value="1"/>
</dbReference>
<dbReference type="FunFam" id="3.30.1490.10:FF:000001">
    <property type="entry name" value="30S ribosomal protein S8"/>
    <property type="match status" value="1"/>
</dbReference>
<dbReference type="Gene3D" id="3.30.1370.30">
    <property type="match status" value="1"/>
</dbReference>
<dbReference type="Gene3D" id="3.30.1490.10">
    <property type="match status" value="1"/>
</dbReference>
<dbReference type="HAMAP" id="MF_01302_B">
    <property type="entry name" value="Ribosomal_uS8_B"/>
    <property type="match status" value="1"/>
</dbReference>
<dbReference type="InterPro" id="IPR000630">
    <property type="entry name" value="Ribosomal_uS8"/>
</dbReference>
<dbReference type="InterPro" id="IPR047863">
    <property type="entry name" value="Ribosomal_uS8_CS"/>
</dbReference>
<dbReference type="InterPro" id="IPR035987">
    <property type="entry name" value="Ribosomal_uS8_sf"/>
</dbReference>
<dbReference type="NCBIfam" id="NF001109">
    <property type="entry name" value="PRK00136.1"/>
    <property type="match status" value="1"/>
</dbReference>
<dbReference type="PANTHER" id="PTHR11758">
    <property type="entry name" value="40S RIBOSOMAL PROTEIN S15A"/>
    <property type="match status" value="1"/>
</dbReference>
<dbReference type="Pfam" id="PF00410">
    <property type="entry name" value="Ribosomal_S8"/>
    <property type="match status" value="1"/>
</dbReference>
<dbReference type="SUPFAM" id="SSF56047">
    <property type="entry name" value="Ribosomal protein S8"/>
    <property type="match status" value="1"/>
</dbReference>
<dbReference type="PROSITE" id="PS00053">
    <property type="entry name" value="RIBOSOMAL_S8"/>
    <property type="match status" value="1"/>
</dbReference>
<feature type="initiator methionine" description="Removed" evidence="1">
    <location>
        <position position="1"/>
    </location>
</feature>
<feature type="chain" id="PRO_0000126412" description="Small ribosomal subunit protein uS8">
    <location>
        <begin position="2"/>
        <end position="132"/>
    </location>
</feature>
<protein>
    <recommendedName>
        <fullName evidence="2">Small ribosomal subunit protein uS8</fullName>
    </recommendedName>
    <alternativeName>
        <fullName evidence="3">30S ribosomal protein S8</fullName>
    </alternativeName>
</protein>
<accession>Q5L409</accession>
<sequence>MVMTDPIADMLTRIRNANMVRHEKLEVPASKIKREIAEILKREGFIRDYEYIEDNKQGILRIFLKYGPNNERVITGLKRISKPGLRVYVKAHEVPRVLNGLGIAILSTSQGILTDKEARQKGTGGEVIAYVW</sequence>
<gene>
    <name evidence="2" type="primary">rpsH</name>
    <name type="ordered locus">GK0120</name>
</gene>
<reference key="1">
    <citation type="journal article" date="2004" name="Nucleic Acids Res.">
        <title>Thermoadaptation trait revealed by the genome sequence of thermophilic Geobacillus kaustophilus.</title>
        <authorList>
            <person name="Takami H."/>
            <person name="Takaki Y."/>
            <person name="Chee G.-J."/>
            <person name="Nishi S."/>
            <person name="Shimamura S."/>
            <person name="Suzuki H."/>
            <person name="Matsui S."/>
            <person name="Uchiyama I."/>
        </authorList>
    </citation>
    <scope>NUCLEOTIDE SEQUENCE [LARGE SCALE GENOMIC DNA]</scope>
    <source>
        <strain>HTA426</strain>
    </source>
</reference>
<proteinExistence type="inferred from homology"/>
<keyword id="KW-1185">Reference proteome</keyword>
<keyword id="KW-0687">Ribonucleoprotein</keyword>
<keyword id="KW-0689">Ribosomal protein</keyword>
<keyword id="KW-0694">RNA-binding</keyword>
<keyword id="KW-0699">rRNA-binding</keyword>